<evidence type="ECO:0000250" key="1"/>
<evidence type="ECO:0000305" key="2"/>
<name>RR7_BIGNA</name>
<keyword id="KW-0150">Chloroplast</keyword>
<keyword id="KW-0934">Plastid</keyword>
<keyword id="KW-0687">Ribonucleoprotein</keyword>
<keyword id="KW-0689">Ribosomal protein</keyword>
<keyword id="KW-0694">RNA-binding</keyword>
<keyword id="KW-0699">rRNA-binding</keyword>
<proteinExistence type="inferred from homology"/>
<protein>
    <recommendedName>
        <fullName evidence="2">Small ribosomal subunit protein uS7c</fullName>
    </recommendedName>
    <alternativeName>
        <fullName>30S ribosomal protein S7, chloroplastic</fullName>
    </alternativeName>
</protein>
<geneLocation type="chloroplast"/>
<organism>
    <name type="scientific">Bigelowiella natans</name>
    <name type="common">Pedinomonas minutissima</name>
    <name type="synonym">Chlorarachnion sp. (strain CCMP621)</name>
    <dbReference type="NCBI Taxonomy" id="227086"/>
    <lineage>
        <taxon>Eukaryota</taxon>
        <taxon>Sar</taxon>
        <taxon>Rhizaria</taxon>
        <taxon>Cercozoa</taxon>
        <taxon>Chlorarachniophyceae</taxon>
        <taxon>Bigelowiella</taxon>
    </lineage>
</organism>
<reference key="1">
    <citation type="journal article" date="2007" name="Mol. Biol. Evol.">
        <title>The complete chloroplast genome of the chlorarachniophyte Bigelowiella natans: evidence for independent origins of chlorarachniophyte and euglenid secondary endosymbionts.</title>
        <authorList>
            <person name="Rogers M.B."/>
            <person name="Gilson P.R."/>
            <person name="Su V."/>
            <person name="McFadden G.I."/>
            <person name="Keeling P.J."/>
        </authorList>
    </citation>
    <scope>NUCLEOTIDE SEQUENCE [LARGE SCALE GENOMIC DNA]</scope>
</reference>
<sequence>MSRRKLSKKRIFKKDPFYNNELIQIIINRIMKKGNKALARKIIYRSLKDIELVTKQDPIKIVEQAVSNVTPFVEIRSRRLGGSTTQIPVFINNERGVTLAIRWLFQASKNKAGNKYSIIKRLSSEIVNASNGMGEAIKKRDEMHRMAEANKTIVKYNVL</sequence>
<comment type="function">
    <text evidence="1">One of the primary rRNA binding proteins, it binds directly to 16S rRNA where it nucleates assembly of the head domain of the 30S subunit.</text>
</comment>
<comment type="subunit">
    <text>Part of the 30S ribosomal subunit.</text>
</comment>
<comment type="subcellular location">
    <subcellularLocation>
        <location>Plastid</location>
        <location>Chloroplast</location>
    </subcellularLocation>
</comment>
<comment type="similarity">
    <text evidence="2">Belongs to the universal ribosomal protein uS7 family.</text>
</comment>
<gene>
    <name type="primary">rps7</name>
</gene>
<dbReference type="EMBL" id="DQ851108">
    <property type="protein sequence ID" value="ABG91426.1"/>
    <property type="molecule type" value="Genomic_DNA"/>
</dbReference>
<dbReference type="RefSeq" id="YP_778594.1">
    <property type="nucleotide sequence ID" value="NC_008408.1"/>
</dbReference>
<dbReference type="SMR" id="Q06J33"/>
<dbReference type="GeneID" id="4353011"/>
<dbReference type="GO" id="GO:0009507">
    <property type="term" value="C:chloroplast"/>
    <property type="evidence" value="ECO:0007669"/>
    <property type="project" value="UniProtKB-SubCell"/>
</dbReference>
<dbReference type="GO" id="GO:0015935">
    <property type="term" value="C:small ribosomal subunit"/>
    <property type="evidence" value="ECO:0007669"/>
    <property type="project" value="InterPro"/>
</dbReference>
<dbReference type="GO" id="GO:0019843">
    <property type="term" value="F:rRNA binding"/>
    <property type="evidence" value="ECO:0007669"/>
    <property type="project" value="UniProtKB-UniRule"/>
</dbReference>
<dbReference type="GO" id="GO:0003735">
    <property type="term" value="F:structural constituent of ribosome"/>
    <property type="evidence" value="ECO:0007669"/>
    <property type="project" value="InterPro"/>
</dbReference>
<dbReference type="GO" id="GO:0006412">
    <property type="term" value="P:translation"/>
    <property type="evidence" value="ECO:0007669"/>
    <property type="project" value="UniProtKB-UniRule"/>
</dbReference>
<dbReference type="CDD" id="cd14871">
    <property type="entry name" value="uS7_Chloroplast"/>
    <property type="match status" value="1"/>
</dbReference>
<dbReference type="Gene3D" id="1.10.455.10">
    <property type="entry name" value="Ribosomal protein S7 domain"/>
    <property type="match status" value="1"/>
</dbReference>
<dbReference type="HAMAP" id="MF_00480_B">
    <property type="entry name" value="Ribosomal_uS7_B"/>
    <property type="match status" value="1"/>
</dbReference>
<dbReference type="InterPro" id="IPR000235">
    <property type="entry name" value="Ribosomal_uS7"/>
</dbReference>
<dbReference type="InterPro" id="IPR005717">
    <property type="entry name" value="Ribosomal_uS7_bac/org-type"/>
</dbReference>
<dbReference type="InterPro" id="IPR023798">
    <property type="entry name" value="Ribosomal_uS7_dom"/>
</dbReference>
<dbReference type="InterPro" id="IPR036823">
    <property type="entry name" value="Ribosomal_uS7_dom_sf"/>
</dbReference>
<dbReference type="NCBIfam" id="TIGR01029">
    <property type="entry name" value="rpsG_bact"/>
    <property type="match status" value="1"/>
</dbReference>
<dbReference type="PANTHER" id="PTHR11205">
    <property type="entry name" value="RIBOSOMAL PROTEIN S7"/>
    <property type="match status" value="1"/>
</dbReference>
<dbReference type="Pfam" id="PF00177">
    <property type="entry name" value="Ribosomal_S7"/>
    <property type="match status" value="1"/>
</dbReference>
<dbReference type="PIRSF" id="PIRSF002122">
    <property type="entry name" value="RPS7p_RPS7a_RPS5e_RPS7o"/>
    <property type="match status" value="1"/>
</dbReference>
<dbReference type="SUPFAM" id="SSF47973">
    <property type="entry name" value="Ribosomal protein S7"/>
    <property type="match status" value="1"/>
</dbReference>
<feature type="chain" id="PRO_0000295906" description="Small ribosomal subunit protein uS7c">
    <location>
        <begin position="1"/>
        <end position="159"/>
    </location>
</feature>
<accession>Q06J33</accession>